<reference key="1">
    <citation type="journal article" date="2000" name="Nature">
        <title>Sequence and analysis of chromosome 1 of the plant Arabidopsis thaliana.</title>
        <authorList>
            <person name="Theologis A."/>
            <person name="Ecker J.R."/>
            <person name="Palm C.J."/>
            <person name="Federspiel N.A."/>
            <person name="Kaul S."/>
            <person name="White O."/>
            <person name="Alonso J."/>
            <person name="Altafi H."/>
            <person name="Araujo R."/>
            <person name="Bowman C.L."/>
            <person name="Brooks S.Y."/>
            <person name="Buehler E."/>
            <person name="Chan A."/>
            <person name="Chao Q."/>
            <person name="Chen H."/>
            <person name="Cheuk R.F."/>
            <person name="Chin C.W."/>
            <person name="Chung M.K."/>
            <person name="Conn L."/>
            <person name="Conway A.B."/>
            <person name="Conway A.R."/>
            <person name="Creasy T.H."/>
            <person name="Dewar K."/>
            <person name="Dunn P."/>
            <person name="Etgu P."/>
            <person name="Feldblyum T.V."/>
            <person name="Feng J.-D."/>
            <person name="Fong B."/>
            <person name="Fujii C.Y."/>
            <person name="Gill J.E."/>
            <person name="Goldsmith A.D."/>
            <person name="Haas B."/>
            <person name="Hansen N.F."/>
            <person name="Hughes B."/>
            <person name="Huizar L."/>
            <person name="Hunter J.L."/>
            <person name="Jenkins J."/>
            <person name="Johnson-Hopson C."/>
            <person name="Khan S."/>
            <person name="Khaykin E."/>
            <person name="Kim C.J."/>
            <person name="Koo H.L."/>
            <person name="Kremenetskaia I."/>
            <person name="Kurtz D.B."/>
            <person name="Kwan A."/>
            <person name="Lam B."/>
            <person name="Langin-Hooper S."/>
            <person name="Lee A."/>
            <person name="Lee J.M."/>
            <person name="Lenz C.A."/>
            <person name="Li J.H."/>
            <person name="Li Y.-P."/>
            <person name="Lin X."/>
            <person name="Liu S.X."/>
            <person name="Liu Z.A."/>
            <person name="Luros J.S."/>
            <person name="Maiti R."/>
            <person name="Marziali A."/>
            <person name="Militscher J."/>
            <person name="Miranda M."/>
            <person name="Nguyen M."/>
            <person name="Nierman W.C."/>
            <person name="Osborne B.I."/>
            <person name="Pai G."/>
            <person name="Peterson J."/>
            <person name="Pham P.K."/>
            <person name="Rizzo M."/>
            <person name="Rooney T."/>
            <person name="Rowley D."/>
            <person name="Sakano H."/>
            <person name="Salzberg S.L."/>
            <person name="Schwartz J.R."/>
            <person name="Shinn P."/>
            <person name="Southwick A.M."/>
            <person name="Sun H."/>
            <person name="Tallon L.J."/>
            <person name="Tambunga G."/>
            <person name="Toriumi M.J."/>
            <person name="Town C.D."/>
            <person name="Utterback T."/>
            <person name="Van Aken S."/>
            <person name="Vaysberg M."/>
            <person name="Vysotskaia V.S."/>
            <person name="Walker M."/>
            <person name="Wu D."/>
            <person name="Yu G."/>
            <person name="Fraser C.M."/>
            <person name="Venter J.C."/>
            <person name="Davis R.W."/>
        </authorList>
    </citation>
    <scope>NUCLEOTIDE SEQUENCE [LARGE SCALE GENOMIC DNA]</scope>
    <source>
        <strain>cv. Columbia</strain>
    </source>
</reference>
<reference key="2">
    <citation type="journal article" date="2017" name="Plant J.">
        <title>Araport11: a complete reannotation of the Arabidopsis thaliana reference genome.</title>
        <authorList>
            <person name="Cheng C.Y."/>
            <person name="Krishnakumar V."/>
            <person name="Chan A.P."/>
            <person name="Thibaud-Nissen F."/>
            <person name="Schobel S."/>
            <person name="Town C.D."/>
        </authorList>
    </citation>
    <scope>GENOME REANNOTATION</scope>
    <source>
        <strain>cv. Columbia</strain>
    </source>
</reference>
<reference key="3">
    <citation type="journal article" date="2003" name="Science">
        <title>Empirical analysis of transcriptional activity in the Arabidopsis genome.</title>
        <authorList>
            <person name="Yamada K."/>
            <person name="Lim J."/>
            <person name="Dale J.M."/>
            <person name="Chen H."/>
            <person name="Shinn P."/>
            <person name="Palm C.J."/>
            <person name="Southwick A.M."/>
            <person name="Wu H.C."/>
            <person name="Kim C.J."/>
            <person name="Nguyen M."/>
            <person name="Pham P.K."/>
            <person name="Cheuk R.F."/>
            <person name="Karlin-Newmann G."/>
            <person name="Liu S.X."/>
            <person name="Lam B."/>
            <person name="Sakano H."/>
            <person name="Wu T."/>
            <person name="Yu G."/>
            <person name="Miranda M."/>
            <person name="Quach H.L."/>
            <person name="Tripp M."/>
            <person name="Chang C.H."/>
            <person name="Lee J.M."/>
            <person name="Toriumi M.J."/>
            <person name="Chan M.M."/>
            <person name="Tang C.C."/>
            <person name="Onodera C.S."/>
            <person name="Deng J.M."/>
            <person name="Akiyama K."/>
            <person name="Ansari Y."/>
            <person name="Arakawa T."/>
            <person name="Banh J."/>
            <person name="Banno F."/>
            <person name="Bowser L."/>
            <person name="Brooks S.Y."/>
            <person name="Carninci P."/>
            <person name="Chao Q."/>
            <person name="Choy N."/>
            <person name="Enju A."/>
            <person name="Goldsmith A.D."/>
            <person name="Gurjal M."/>
            <person name="Hansen N.F."/>
            <person name="Hayashizaki Y."/>
            <person name="Johnson-Hopson C."/>
            <person name="Hsuan V.W."/>
            <person name="Iida K."/>
            <person name="Karnes M."/>
            <person name="Khan S."/>
            <person name="Koesema E."/>
            <person name="Ishida J."/>
            <person name="Jiang P.X."/>
            <person name="Jones T."/>
            <person name="Kawai J."/>
            <person name="Kamiya A."/>
            <person name="Meyers C."/>
            <person name="Nakajima M."/>
            <person name="Narusaka M."/>
            <person name="Seki M."/>
            <person name="Sakurai T."/>
            <person name="Satou M."/>
            <person name="Tamse R."/>
            <person name="Vaysberg M."/>
            <person name="Wallender E.K."/>
            <person name="Wong C."/>
            <person name="Yamamura Y."/>
            <person name="Yuan S."/>
            <person name="Shinozaki K."/>
            <person name="Davis R.W."/>
            <person name="Theologis A."/>
            <person name="Ecker J.R."/>
        </authorList>
    </citation>
    <scope>NUCLEOTIDE SEQUENCE [LARGE SCALE MRNA]</scope>
    <source>
        <strain>cv. Columbia</strain>
    </source>
</reference>
<reference key="4">
    <citation type="submission" date="2006-05" db="EMBL/GenBank/DDBJ databases">
        <title>Arabidopsis ORF clones.</title>
        <authorList>
            <person name="Shinn P."/>
            <person name="Chen H."/>
            <person name="Kim C.J."/>
            <person name="Quinitio C."/>
            <person name="Ecker J.R."/>
        </authorList>
    </citation>
    <scope>NUCLEOTIDE SEQUENCE [LARGE SCALE MRNA]</scope>
    <source>
        <strain>cv. Columbia</strain>
    </source>
</reference>
<reference key="5">
    <citation type="journal article" date="1998" name="Gene">
        <title>Characterization of the pectin methylesterase-like gene AtPME3: a new member of a gene family comprising at least 12 genes in Arabidopsis thaliana.</title>
        <authorList>
            <person name="Micheli F."/>
            <person name="Holliger C."/>
            <person name="Goldberg R."/>
            <person name="Richard L."/>
        </authorList>
    </citation>
    <scope>NUCLEOTIDE SEQUENCE [GENOMIC DNA] OF 391-469</scope>
    <scope>TISSUE SPECIFICITY</scope>
    <source>
        <strain>cv. Columbia</strain>
    </source>
</reference>
<reference key="6">
    <citation type="journal article" date="2008" name="Biochim. Biophys. Acta">
        <title>Novel role for pectin methylesterase in Arabidopsis: a new function showing ribosome-inactivating protein (RIP) activity.</title>
        <authorList>
            <person name="De-la-Pena C."/>
            <person name="Badri D.V."/>
            <person name="Vivanco J.M."/>
        </authorList>
    </citation>
    <scope>PROTEIN SEQUENCE OF 243-251; 257-274; 282-292; 296-382; 387-413; 429-441; 444-454 AND 530-557</scope>
    <scope>FUNCTION</scope>
</reference>
<reference key="7">
    <citation type="journal article" date="2004" name="Carbohydr. Res.">
        <title>Pectin methylesterases: sequence-structural features and phylogenetic relationships.</title>
        <authorList>
            <person name="Markovic O."/>
            <person name="Janecek S."/>
        </authorList>
    </citation>
    <scope>GENE FAMILY</scope>
    <scope>NOMENCLATURE</scope>
</reference>
<reference key="8">
    <citation type="journal article" date="2006" name="Planta">
        <title>Comprehensive expression profiling of the pectin methylesterase gene family during silique development in Arabidopsis thaliana.</title>
        <authorList>
            <person name="Louvet R."/>
            <person name="Cavel E."/>
            <person name="Gutierrez L."/>
            <person name="Guenin S."/>
            <person name="Roger D."/>
            <person name="Gillet F."/>
            <person name="Guerineau F."/>
            <person name="Pelloux J."/>
        </authorList>
    </citation>
    <scope>TISSUE SPECIFICITY</scope>
    <scope>DEVELOPMENTAL STAGE</scope>
</reference>
<name>PME18_ARATH</name>
<accession>Q1JPL7</accession>
<accession>O49007</accession>
<accession>Q94AF4</accession>
<accession>Q94C39</accession>
<accession>Q9LPX8</accession>
<accession>Q9LPX9</accession>
<dbReference type="EC" id="3.1.1.11"/>
<dbReference type="EC" id="3.2.2.22"/>
<dbReference type="EMBL" id="AC011661">
    <property type="protein sequence ID" value="AAF16636.1"/>
    <property type="status" value="ALT_SEQ"/>
    <property type="molecule type" value="Genomic_DNA"/>
</dbReference>
<dbReference type="EMBL" id="AC011661">
    <property type="protein sequence ID" value="AAF16637.1"/>
    <property type="status" value="ALT_SEQ"/>
    <property type="molecule type" value="Genomic_DNA"/>
</dbReference>
<dbReference type="EMBL" id="CP002684">
    <property type="protein sequence ID" value="AEE28755.1"/>
    <property type="molecule type" value="Genomic_DNA"/>
</dbReference>
<dbReference type="EMBL" id="AY037175">
    <property type="protein sequence ID" value="AAK59760.1"/>
    <property type="molecule type" value="mRNA"/>
</dbReference>
<dbReference type="EMBL" id="AY048217">
    <property type="protein sequence ID" value="AAK82480.1"/>
    <property type="molecule type" value="mRNA"/>
</dbReference>
<dbReference type="EMBL" id="BT025336">
    <property type="protein sequence ID" value="ABF57292.1"/>
    <property type="molecule type" value="mRNA"/>
</dbReference>
<dbReference type="EMBL" id="AF033205">
    <property type="protein sequence ID" value="AAC02973.1"/>
    <property type="molecule type" value="Genomic_DNA"/>
</dbReference>
<dbReference type="PIR" id="A86249">
    <property type="entry name" value="A86249"/>
</dbReference>
<dbReference type="SMR" id="Q1JPL7"/>
<dbReference type="BioGRID" id="22941">
    <property type="interactions" value="2"/>
</dbReference>
<dbReference type="FunCoup" id="Q1JPL7">
    <property type="interactions" value="157"/>
</dbReference>
<dbReference type="STRING" id="3702.Q1JPL7"/>
<dbReference type="iPTMnet" id="Q1JPL7"/>
<dbReference type="MetOSite" id="Q1JPL7"/>
<dbReference type="SwissPalm" id="Q1JPL7"/>
<dbReference type="PaxDb" id="3702-AT1G11580.1"/>
<dbReference type="ProteomicsDB" id="234737"/>
<dbReference type="EnsemblPlants" id="AT1G11580.1">
    <property type="protein sequence ID" value="AT1G11580.1"/>
    <property type="gene ID" value="AT1G11580"/>
</dbReference>
<dbReference type="GeneID" id="837701"/>
<dbReference type="Gramene" id="AT1G11580.1">
    <property type="protein sequence ID" value="AT1G11580.1"/>
    <property type="gene ID" value="AT1G11580"/>
</dbReference>
<dbReference type="KEGG" id="ath:AT1G11580"/>
<dbReference type="Araport" id="AT1G11580"/>
<dbReference type="TAIR" id="AT1G11580">
    <property type="gene designation" value="PMEPCRA"/>
</dbReference>
<dbReference type="eggNOG" id="ENOG502QUQ5">
    <property type="taxonomic scope" value="Eukaryota"/>
</dbReference>
<dbReference type="HOGENOM" id="CLU_012243_9_2_1"/>
<dbReference type="InParanoid" id="Q1JPL7"/>
<dbReference type="OMA" id="ENVEICQ"/>
<dbReference type="UniPathway" id="UPA00545">
    <property type="reaction ID" value="UER00823"/>
</dbReference>
<dbReference type="CD-CODE" id="4299E36E">
    <property type="entry name" value="Nucleolus"/>
</dbReference>
<dbReference type="PRO" id="PR:Q1JPL7"/>
<dbReference type="Proteomes" id="UP000006548">
    <property type="component" value="Chromosome 1"/>
</dbReference>
<dbReference type="ExpressionAtlas" id="Q1JPL7">
    <property type="expression patterns" value="baseline and differential"/>
</dbReference>
<dbReference type="GO" id="GO:0005576">
    <property type="term" value="C:extracellular region"/>
    <property type="evidence" value="ECO:0007005"/>
    <property type="project" value="TAIR"/>
</dbReference>
<dbReference type="GO" id="GO:0016020">
    <property type="term" value="C:membrane"/>
    <property type="evidence" value="ECO:0007005"/>
    <property type="project" value="TAIR"/>
</dbReference>
<dbReference type="GO" id="GO:0000325">
    <property type="term" value="C:plant-type vacuole"/>
    <property type="evidence" value="ECO:0007005"/>
    <property type="project" value="TAIR"/>
</dbReference>
<dbReference type="GO" id="GO:0004857">
    <property type="term" value="F:enzyme inhibitor activity"/>
    <property type="evidence" value="ECO:0007669"/>
    <property type="project" value="InterPro"/>
</dbReference>
<dbReference type="GO" id="GO:0030599">
    <property type="term" value="F:pectinesterase activity"/>
    <property type="evidence" value="ECO:0007669"/>
    <property type="project" value="UniProtKB-EC"/>
</dbReference>
<dbReference type="GO" id="GO:0030598">
    <property type="term" value="F:rRNA N-glycosylase activity"/>
    <property type="evidence" value="ECO:0007669"/>
    <property type="project" value="UniProtKB-EC"/>
</dbReference>
<dbReference type="GO" id="GO:0090729">
    <property type="term" value="F:toxin activity"/>
    <property type="evidence" value="ECO:0007669"/>
    <property type="project" value="UniProtKB-KW"/>
</dbReference>
<dbReference type="GO" id="GO:0042545">
    <property type="term" value="P:cell wall modification"/>
    <property type="evidence" value="ECO:0007669"/>
    <property type="project" value="InterPro"/>
</dbReference>
<dbReference type="GO" id="GO:0050832">
    <property type="term" value="P:defense response to fungus"/>
    <property type="evidence" value="ECO:0007669"/>
    <property type="project" value="UniProtKB-KW"/>
</dbReference>
<dbReference type="GO" id="GO:0031640">
    <property type="term" value="P:killing of cells of another organism"/>
    <property type="evidence" value="ECO:0007669"/>
    <property type="project" value="UniProtKB-KW"/>
</dbReference>
<dbReference type="GO" id="GO:0017148">
    <property type="term" value="P:negative regulation of translation"/>
    <property type="evidence" value="ECO:0007669"/>
    <property type="project" value="UniProtKB-KW"/>
</dbReference>
<dbReference type="GO" id="GO:0045490">
    <property type="term" value="P:pectin catabolic process"/>
    <property type="evidence" value="ECO:0007669"/>
    <property type="project" value="UniProtKB-UniPathway"/>
</dbReference>
<dbReference type="GO" id="GO:0009617">
    <property type="term" value="P:response to bacterium"/>
    <property type="evidence" value="ECO:0000270"/>
    <property type="project" value="TAIR"/>
</dbReference>
<dbReference type="CDD" id="cd15799">
    <property type="entry name" value="PMEI-like_4"/>
    <property type="match status" value="1"/>
</dbReference>
<dbReference type="FunFam" id="2.160.20.10:FF:000001">
    <property type="entry name" value="Pectinesterase"/>
    <property type="match status" value="1"/>
</dbReference>
<dbReference type="FunFam" id="1.20.140.40:FF:000015">
    <property type="entry name" value="Pectinesterase 3"/>
    <property type="match status" value="1"/>
</dbReference>
<dbReference type="Gene3D" id="1.20.140.40">
    <property type="entry name" value="Invertase/pectin methylesterase inhibitor family protein"/>
    <property type="match status" value="1"/>
</dbReference>
<dbReference type="Gene3D" id="2.160.20.10">
    <property type="entry name" value="Single-stranded right-handed beta-helix, Pectin lyase-like"/>
    <property type="match status" value="1"/>
</dbReference>
<dbReference type="InterPro" id="IPR035513">
    <property type="entry name" value="Invertase/methylesterase_inhib"/>
</dbReference>
<dbReference type="InterPro" id="IPR012334">
    <property type="entry name" value="Pectin_lyas_fold"/>
</dbReference>
<dbReference type="InterPro" id="IPR011050">
    <property type="entry name" value="Pectin_lyase_fold/virulence"/>
</dbReference>
<dbReference type="InterPro" id="IPR033131">
    <property type="entry name" value="Pectinesterase_Asp_AS"/>
</dbReference>
<dbReference type="InterPro" id="IPR000070">
    <property type="entry name" value="Pectinesterase_cat"/>
</dbReference>
<dbReference type="InterPro" id="IPR006501">
    <property type="entry name" value="Pectinesterase_inhib_dom"/>
</dbReference>
<dbReference type="InterPro" id="IPR018040">
    <property type="entry name" value="Pectinesterase_Tyr_AS"/>
</dbReference>
<dbReference type="NCBIfam" id="TIGR01614">
    <property type="entry name" value="PME_inhib"/>
    <property type="match status" value="1"/>
</dbReference>
<dbReference type="PANTHER" id="PTHR31707">
    <property type="entry name" value="PECTINESTERASE"/>
    <property type="match status" value="1"/>
</dbReference>
<dbReference type="Pfam" id="PF01095">
    <property type="entry name" value="Pectinesterase"/>
    <property type="match status" value="1"/>
</dbReference>
<dbReference type="Pfam" id="PF04043">
    <property type="entry name" value="PMEI"/>
    <property type="match status" value="1"/>
</dbReference>
<dbReference type="SMART" id="SM00856">
    <property type="entry name" value="PMEI"/>
    <property type="match status" value="1"/>
</dbReference>
<dbReference type="SUPFAM" id="SSF51126">
    <property type="entry name" value="Pectin lyase-like"/>
    <property type="match status" value="1"/>
</dbReference>
<dbReference type="SUPFAM" id="SSF101148">
    <property type="entry name" value="Plant invertase/pectin methylesterase inhibitor"/>
    <property type="match status" value="1"/>
</dbReference>
<dbReference type="PROSITE" id="PS00800">
    <property type="entry name" value="PECTINESTERASE_1"/>
    <property type="match status" value="1"/>
</dbReference>
<dbReference type="PROSITE" id="PS00503">
    <property type="entry name" value="PECTINESTERASE_2"/>
    <property type="match status" value="1"/>
</dbReference>
<proteinExistence type="evidence at protein level"/>
<keyword id="KW-0929">Antimicrobial</keyword>
<keyword id="KW-0063">Aspartyl esterase</keyword>
<keyword id="KW-0134">Cell wall</keyword>
<keyword id="KW-0961">Cell wall biogenesis/degradation</keyword>
<keyword id="KW-0903">Direct protein sequencing</keyword>
<keyword id="KW-0295">Fungicide</keyword>
<keyword id="KW-0378">Hydrolase</keyword>
<keyword id="KW-0611">Plant defense</keyword>
<keyword id="KW-0652">Protein synthesis inhibitor</keyword>
<keyword id="KW-1185">Reference proteome</keyword>
<keyword id="KW-0964">Secreted</keyword>
<keyword id="KW-0732">Signal</keyword>
<keyword id="KW-0800">Toxin</keyword>
<feature type="signal peptide" evidence="2">
    <location>
        <begin position="1"/>
        <end position="34"/>
    </location>
</feature>
<feature type="chain" id="PRO_0000370182" description="Pectinesterase/pectinesterase inhibitor 18">
    <location>
        <begin position="35"/>
        <end position="557"/>
    </location>
</feature>
<feature type="chain" id="PRO_0000370183" description="Pectinesterase inhibitor 18" evidence="2">
    <location>
        <begin position="35"/>
        <end position="242"/>
    </location>
</feature>
<feature type="chain" id="PRO_0000370184" description="Bifunctional pectinesterase 18/rRNA N-glycosylase">
    <location>
        <begin position="243"/>
        <end position="557"/>
    </location>
</feature>
<feature type="region of interest" description="Pectinesterase inhibitor 18">
    <location>
        <begin position="47"/>
        <end position="203"/>
    </location>
</feature>
<feature type="region of interest" description="Pectinesterase 18">
    <location>
        <begin position="246"/>
        <end position="543"/>
    </location>
</feature>
<feature type="active site" description="Proton donor; for pectinesterase activity" evidence="3">
    <location>
        <position position="374"/>
    </location>
</feature>
<feature type="active site" description="Nucleophile; for pectinesterase activity" evidence="3">
    <location>
        <position position="395"/>
    </location>
</feature>
<feature type="binding site" evidence="1">
    <location>
        <position position="321"/>
    </location>
    <ligand>
        <name>substrate</name>
        <note>for pectinesterase activity</note>
    </ligand>
</feature>
<feature type="binding site" evidence="1">
    <location>
        <position position="351"/>
    </location>
    <ligand>
        <name>substrate</name>
        <note>for pectinesterase activity</note>
    </ligand>
</feature>
<feature type="binding site" evidence="1">
    <location>
        <position position="463"/>
    </location>
    <ligand>
        <name>substrate</name>
        <note>for pectinesterase activity</note>
    </ligand>
</feature>
<feature type="binding site" evidence="1">
    <location>
        <position position="465"/>
    </location>
    <ligand>
        <name>substrate</name>
        <note>for pectinesterase activity</note>
    </ligand>
</feature>
<feature type="site" description="Transition state stabilizer" evidence="1">
    <location>
        <position position="373"/>
    </location>
</feature>
<feature type="sequence conflict" description="In Ref. 3; AAK59760." evidence="7" ref="3">
    <original>S</original>
    <variation>Y</variation>
    <location>
        <position position="14"/>
    </location>
</feature>
<feature type="sequence conflict" description="In Ref. 5; AAC02973." evidence="7" ref="5">
    <original>F</original>
    <variation>Y</variation>
    <location>
        <position position="460"/>
    </location>
</feature>
<feature type="sequence conflict" description="In Ref. 5; AAC02973." evidence="7" ref="5">
    <original>L</original>
    <variation>E</variation>
    <location>
        <position position="467"/>
    </location>
</feature>
<comment type="function">
    <text evidence="5">Acts in the modification of cell walls via demethylesterification of cell wall pectin. Inhibits the elongation phase of protein synthesis.</text>
</comment>
<comment type="catalytic activity">
    <reaction>
        <text>[(1-&gt;4)-alpha-D-galacturonosyl methyl ester](n) + n H2O = [(1-&gt;4)-alpha-D-galacturonosyl](n) + n methanol + n H(+)</text>
        <dbReference type="Rhea" id="RHEA:22380"/>
        <dbReference type="Rhea" id="RHEA-COMP:14570"/>
        <dbReference type="Rhea" id="RHEA-COMP:14573"/>
        <dbReference type="ChEBI" id="CHEBI:15377"/>
        <dbReference type="ChEBI" id="CHEBI:15378"/>
        <dbReference type="ChEBI" id="CHEBI:17790"/>
        <dbReference type="ChEBI" id="CHEBI:140522"/>
        <dbReference type="ChEBI" id="CHEBI:140523"/>
        <dbReference type="EC" id="3.1.1.11"/>
    </reaction>
</comment>
<comment type="catalytic activity">
    <reaction>
        <text>Endohydrolysis of the N-glycosidic bond at one specific adenosine on the 28S rRNA.</text>
        <dbReference type="EC" id="3.2.2.22"/>
    </reaction>
</comment>
<comment type="pathway">
    <text>Glycan metabolism; pectin degradation; 2-dehydro-3-deoxy-D-gluconate from pectin: step 1/5.</text>
</comment>
<comment type="subcellular location">
    <subcellularLocation>
        <location evidence="1">Secreted</location>
        <location evidence="1">Cell wall</location>
    </subcellularLocation>
</comment>
<comment type="tissue specificity">
    <text evidence="4 6">Expressed in siliques, flowers, floral stems, rosette leaves and roots.</text>
</comment>
<comment type="developmental stage">
    <text evidence="4">Expressed during early seed development and late developmental phases of siliques.</text>
</comment>
<comment type="miscellaneous">
    <text>The PMEI region may act as an autoinhibitory domain and prevent untimely PME activity during transport.</text>
</comment>
<comment type="similarity">
    <text evidence="7">In the N-terminal section; belongs to the PMEI family.</text>
</comment>
<comment type="similarity">
    <text evidence="7">In the C-terminal section; belongs to the pectinesterase family.</text>
</comment>
<comment type="sequence caution" evidence="7">
    <conflict type="erroneous gene model prediction">
        <sequence resource="EMBL-CDS" id="AAF16636"/>
    </conflict>
</comment>
<comment type="sequence caution" evidence="7">
    <conflict type="erroneous gene model prediction">
        <sequence resource="EMBL-CDS" id="AAF16637"/>
    </conflict>
</comment>
<evidence type="ECO:0000250" key="1"/>
<evidence type="ECO:0000255" key="2"/>
<evidence type="ECO:0000255" key="3">
    <source>
        <dbReference type="PROSITE-ProRule" id="PRU10040"/>
    </source>
</evidence>
<evidence type="ECO:0000269" key="4">
    <source>
    </source>
</evidence>
<evidence type="ECO:0000269" key="5">
    <source>
    </source>
</evidence>
<evidence type="ECO:0000269" key="6">
    <source>
    </source>
</evidence>
<evidence type="ECO:0000305" key="7"/>
<protein>
    <recommendedName>
        <fullName>Pectinesterase/pectinesterase inhibitor 18</fullName>
    </recommendedName>
    <alternativeName>
        <fullName>AtPMEpcrA</fullName>
    </alternativeName>
    <component>
        <recommendedName>
            <fullName>Pectinesterase inhibitor 18</fullName>
        </recommendedName>
        <alternativeName>
            <fullName>Pectin methylesterase inhibitor 18</fullName>
        </alternativeName>
    </component>
    <component>
        <recommendedName>
            <fullName>Bifunctional pectinesterase 18/rRNA N-glycosylase</fullName>
            <shortName>PE 18</shortName>
            <ecNumber>3.1.1.11</ecNumber>
            <ecNumber>3.2.2.22</ecNumber>
        </recommendedName>
        <alternativeName>
            <fullName>Pectin methylesterase 18</fullName>
        </alternativeName>
        <alternativeName>
            <fullName>Pectin methylesterase 4</fullName>
            <shortName>AtPME4</shortName>
        </alternativeName>
        <alternativeName>
            <fullName>Ribosome-inactivating protein</fullName>
        </alternativeName>
    </component>
</protein>
<gene>
    <name type="primary">PME18</name>
    <name type="synonym">ARATH4</name>
    <name type="ordered locus">At1g11580</name>
    <name type="ORF">T23J18.23</name>
    <name type="ORF">T23J18.24</name>
    <name type="ORF">T23J18.33</name>
</gene>
<sequence length="557" mass="61687">MSNSNQPLLSKPKSLKHKNLCLVLSFVAILGSVAFFTAQLISVNTNNNDDSLLTTSQICHGAHDQDSCQALLSEFTTLSLSKLNRLDLLHVFLKNSVWRLESTMTMVSEARIRSNGVRDKAGFADCEEMMDVSKDRMMSSMEELRGGNYNLESYSNVHTWLSSVLTNYMTCLESISDVSVNSKQIVKPQLEDLVSRARVALAIFVSVLPARDDLKMIISNRFPSWLTALDRKLLESSPKTLKVTANVVVAKDGTGKFKTVNEAVAAAPENSNTRYVIYVKKGVYKETIDIGKKKKNLMLVGDGKDATIITGSLNVIDGSTTFRSATVAANGDGFMAQDIWFQNTAGPAKHQAVALRVSADQTVINRCRIDAYQDTLYTHTLRQFYRDSYITGTVDFIFGNSAVVFQNCDIVARNPGAGQKNMLTAQGREDQNQNTAISIQKCKITASSDLAPVKGSVKTFLGRPWKLYSRTVIMQSFIDNHIDPAGWFPWDGEFALSTLYYGEYANTGPGADTSKRVNWKGFKVIKDSKEAEQFTVAKLIQGGLWLKPTGVTFQEWL</sequence>
<organism>
    <name type="scientific">Arabidopsis thaliana</name>
    <name type="common">Mouse-ear cress</name>
    <dbReference type="NCBI Taxonomy" id="3702"/>
    <lineage>
        <taxon>Eukaryota</taxon>
        <taxon>Viridiplantae</taxon>
        <taxon>Streptophyta</taxon>
        <taxon>Embryophyta</taxon>
        <taxon>Tracheophyta</taxon>
        <taxon>Spermatophyta</taxon>
        <taxon>Magnoliopsida</taxon>
        <taxon>eudicotyledons</taxon>
        <taxon>Gunneridae</taxon>
        <taxon>Pentapetalae</taxon>
        <taxon>rosids</taxon>
        <taxon>malvids</taxon>
        <taxon>Brassicales</taxon>
        <taxon>Brassicaceae</taxon>
        <taxon>Camelineae</taxon>
        <taxon>Arabidopsis</taxon>
    </lineage>
</organism>